<proteinExistence type="inferred from homology"/>
<accession>Q7TUS4</accession>
<dbReference type="EC" id="5.6.1.7" evidence="1"/>
<dbReference type="EMBL" id="BX548175">
    <property type="protein sequence ID" value="CAE21624.1"/>
    <property type="molecule type" value="Genomic_DNA"/>
</dbReference>
<dbReference type="SMR" id="Q7TUS4"/>
<dbReference type="KEGG" id="pmt:PMT_1449"/>
<dbReference type="eggNOG" id="COG0459">
    <property type="taxonomic scope" value="Bacteria"/>
</dbReference>
<dbReference type="HOGENOM" id="CLU_016503_3_0_3"/>
<dbReference type="OrthoDB" id="9766614at2"/>
<dbReference type="Proteomes" id="UP000001423">
    <property type="component" value="Chromosome"/>
</dbReference>
<dbReference type="GO" id="GO:0005737">
    <property type="term" value="C:cytoplasm"/>
    <property type="evidence" value="ECO:0007669"/>
    <property type="project" value="UniProtKB-SubCell"/>
</dbReference>
<dbReference type="GO" id="GO:0005524">
    <property type="term" value="F:ATP binding"/>
    <property type="evidence" value="ECO:0007669"/>
    <property type="project" value="UniProtKB-UniRule"/>
</dbReference>
<dbReference type="GO" id="GO:0140662">
    <property type="term" value="F:ATP-dependent protein folding chaperone"/>
    <property type="evidence" value="ECO:0007669"/>
    <property type="project" value="InterPro"/>
</dbReference>
<dbReference type="GO" id="GO:0016853">
    <property type="term" value="F:isomerase activity"/>
    <property type="evidence" value="ECO:0007669"/>
    <property type="project" value="UniProtKB-KW"/>
</dbReference>
<dbReference type="GO" id="GO:0051082">
    <property type="term" value="F:unfolded protein binding"/>
    <property type="evidence" value="ECO:0007669"/>
    <property type="project" value="UniProtKB-UniRule"/>
</dbReference>
<dbReference type="GO" id="GO:0042026">
    <property type="term" value="P:protein refolding"/>
    <property type="evidence" value="ECO:0007669"/>
    <property type="project" value="UniProtKB-UniRule"/>
</dbReference>
<dbReference type="CDD" id="cd03344">
    <property type="entry name" value="GroEL"/>
    <property type="match status" value="1"/>
</dbReference>
<dbReference type="FunFam" id="3.50.7.10:FF:000001">
    <property type="entry name" value="60 kDa chaperonin"/>
    <property type="match status" value="1"/>
</dbReference>
<dbReference type="Gene3D" id="3.50.7.10">
    <property type="entry name" value="GroEL"/>
    <property type="match status" value="1"/>
</dbReference>
<dbReference type="Gene3D" id="1.10.560.10">
    <property type="entry name" value="GroEL-like equatorial domain"/>
    <property type="match status" value="1"/>
</dbReference>
<dbReference type="Gene3D" id="3.30.260.10">
    <property type="entry name" value="TCP-1-like chaperonin intermediate domain"/>
    <property type="match status" value="1"/>
</dbReference>
<dbReference type="HAMAP" id="MF_00600">
    <property type="entry name" value="CH60"/>
    <property type="match status" value="1"/>
</dbReference>
<dbReference type="InterPro" id="IPR018370">
    <property type="entry name" value="Chaperonin_Cpn60_CS"/>
</dbReference>
<dbReference type="InterPro" id="IPR001844">
    <property type="entry name" value="Cpn60/GroEL"/>
</dbReference>
<dbReference type="InterPro" id="IPR002423">
    <property type="entry name" value="Cpn60/GroEL/TCP-1"/>
</dbReference>
<dbReference type="InterPro" id="IPR027409">
    <property type="entry name" value="GroEL-like_apical_dom_sf"/>
</dbReference>
<dbReference type="InterPro" id="IPR027413">
    <property type="entry name" value="GROEL-like_equatorial_sf"/>
</dbReference>
<dbReference type="InterPro" id="IPR027410">
    <property type="entry name" value="TCP-1-like_intermed_sf"/>
</dbReference>
<dbReference type="NCBIfam" id="TIGR02348">
    <property type="entry name" value="GroEL"/>
    <property type="match status" value="1"/>
</dbReference>
<dbReference type="NCBIfam" id="NF000592">
    <property type="entry name" value="PRK00013.1"/>
    <property type="match status" value="1"/>
</dbReference>
<dbReference type="NCBIfam" id="NF009487">
    <property type="entry name" value="PRK12849.1"/>
    <property type="match status" value="1"/>
</dbReference>
<dbReference type="NCBIfam" id="NF009488">
    <property type="entry name" value="PRK12850.1"/>
    <property type="match status" value="1"/>
</dbReference>
<dbReference type="NCBIfam" id="NF009489">
    <property type="entry name" value="PRK12851.1"/>
    <property type="match status" value="1"/>
</dbReference>
<dbReference type="PANTHER" id="PTHR45633">
    <property type="entry name" value="60 KDA HEAT SHOCK PROTEIN, MITOCHONDRIAL"/>
    <property type="match status" value="1"/>
</dbReference>
<dbReference type="Pfam" id="PF00118">
    <property type="entry name" value="Cpn60_TCP1"/>
    <property type="match status" value="1"/>
</dbReference>
<dbReference type="PRINTS" id="PR00298">
    <property type="entry name" value="CHAPERONIN60"/>
</dbReference>
<dbReference type="SUPFAM" id="SSF52029">
    <property type="entry name" value="GroEL apical domain-like"/>
    <property type="match status" value="1"/>
</dbReference>
<dbReference type="SUPFAM" id="SSF48592">
    <property type="entry name" value="GroEL equatorial domain-like"/>
    <property type="match status" value="2"/>
</dbReference>
<dbReference type="PROSITE" id="PS00296">
    <property type="entry name" value="CHAPERONINS_CPN60"/>
    <property type="match status" value="1"/>
</dbReference>
<protein>
    <recommendedName>
        <fullName evidence="1">Chaperonin GroEL 2</fullName>
        <ecNumber evidence="1">5.6.1.7</ecNumber>
    </recommendedName>
    <alternativeName>
        <fullName evidence="1">60 kDa chaperonin 2</fullName>
    </alternativeName>
    <alternativeName>
        <fullName evidence="1">Chaperonin-60 2</fullName>
        <shortName evidence="1">Cpn60 2</shortName>
    </alternativeName>
</protein>
<organism>
    <name type="scientific">Prochlorococcus marinus (strain MIT 9313)</name>
    <dbReference type="NCBI Taxonomy" id="74547"/>
    <lineage>
        <taxon>Bacteria</taxon>
        <taxon>Bacillati</taxon>
        <taxon>Cyanobacteriota</taxon>
        <taxon>Cyanophyceae</taxon>
        <taxon>Synechococcales</taxon>
        <taxon>Prochlorococcaceae</taxon>
        <taxon>Prochlorococcus</taxon>
    </lineage>
</organism>
<keyword id="KW-0067">ATP-binding</keyword>
<keyword id="KW-0143">Chaperone</keyword>
<keyword id="KW-0963">Cytoplasm</keyword>
<keyword id="KW-0413">Isomerase</keyword>
<keyword id="KW-0547">Nucleotide-binding</keyword>
<keyword id="KW-1185">Reference proteome</keyword>
<evidence type="ECO:0000255" key="1">
    <source>
        <dbReference type="HAMAP-Rule" id="MF_00600"/>
    </source>
</evidence>
<name>CH602_PROMM</name>
<reference key="1">
    <citation type="journal article" date="2003" name="Nature">
        <title>Genome divergence in two Prochlorococcus ecotypes reflects oceanic niche differentiation.</title>
        <authorList>
            <person name="Rocap G."/>
            <person name="Larimer F.W."/>
            <person name="Lamerdin J.E."/>
            <person name="Malfatti S."/>
            <person name="Chain P."/>
            <person name="Ahlgren N.A."/>
            <person name="Arellano A."/>
            <person name="Coleman M."/>
            <person name="Hauser L."/>
            <person name="Hess W.R."/>
            <person name="Johnson Z.I."/>
            <person name="Land M.L."/>
            <person name="Lindell D."/>
            <person name="Post A.F."/>
            <person name="Regala W."/>
            <person name="Shah M."/>
            <person name="Shaw S.L."/>
            <person name="Steglich C."/>
            <person name="Sullivan M.B."/>
            <person name="Ting C.S."/>
            <person name="Tolonen A."/>
            <person name="Webb E.A."/>
            <person name="Zinser E.R."/>
            <person name="Chisholm S.W."/>
        </authorList>
    </citation>
    <scope>NUCLEOTIDE SEQUENCE [LARGE SCALE GENOMIC DNA]</scope>
    <source>
        <strain>MIT 9313</strain>
    </source>
</reference>
<feature type="chain" id="PRO_0000063483" description="Chaperonin GroEL 2">
    <location>
        <begin position="1"/>
        <end position="544"/>
    </location>
</feature>
<feature type="binding site" evidence="1">
    <location>
        <begin position="29"/>
        <end position="32"/>
    </location>
    <ligand>
        <name>ATP</name>
        <dbReference type="ChEBI" id="CHEBI:30616"/>
    </ligand>
</feature>
<feature type="binding site" evidence="1">
    <location>
        <begin position="86"/>
        <end position="90"/>
    </location>
    <ligand>
        <name>ATP</name>
        <dbReference type="ChEBI" id="CHEBI:30616"/>
    </ligand>
</feature>
<feature type="binding site" evidence="1">
    <location>
        <position position="413"/>
    </location>
    <ligand>
        <name>ATP</name>
        <dbReference type="ChEBI" id="CHEBI:30616"/>
    </ligand>
</feature>
<feature type="binding site" evidence="1">
    <location>
        <begin position="479"/>
        <end position="481"/>
    </location>
    <ligand>
        <name>ATP</name>
        <dbReference type="ChEBI" id="CHEBI:30616"/>
    </ligand>
</feature>
<feature type="binding site" evidence="1">
    <location>
        <position position="495"/>
    </location>
    <ligand>
        <name>ATP</name>
        <dbReference type="ChEBI" id="CHEBI:30616"/>
    </ligand>
</feature>
<gene>
    <name evidence="1" type="primary">groEL2</name>
    <name evidence="1" type="synonym">groL2</name>
    <name type="ordered locus">PMT_1449</name>
</gene>
<comment type="function">
    <text evidence="1">Together with its co-chaperonin GroES, plays an essential role in assisting protein folding. The GroEL-GroES system forms a nano-cage that allows encapsulation of the non-native substrate proteins and provides a physical environment optimized to promote and accelerate protein folding.</text>
</comment>
<comment type="catalytic activity">
    <reaction evidence="1">
        <text>ATP + H2O + a folded polypeptide = ADP + phosphate + an unfolded polypeptide.</text>
        <dbReference type="EC" id="5.6.1.7"/>
    </reaction>
</comment>
<comment type="subunit">
    <text evidence="1">Forms a cylinder of 14 subunits composed of two heptameric rings stacked back-to-back. Interacts with the co-chaperonin GroES.</text>
</comment>
<comment type="subcellular location">
    <subcellularLocation>
        <location evidence="1">Cytoplasm</location>
    </subcellularLocation>
</comment>
<comment type="similarity">
    <text evidence="1">Belongs to the chaperonin (HSP60) family.</text>
</comment>
<sequence>MAKRIIYNEQARRALERGIDILAESVAVTLGPKGRNVVLEKKFGAPQIINDGVTIAKEIELEDHIENTGVALIRQAASKTNDAAGDGTTTATVLAHAMVKAGLRNVAAGANAISLKKGIDKASDFLVSKIEELAKPISDSNAIAQCGTIAAGNDEEVGQMIADAMDKVGKEGVISLEEGKSMTTELEVTEGMRFDKGYISPYFATDTERMEAVLDEPYILLTDKKIGLVQDLVPVLEQIARTGKPLLIIAEDIEKEALATLVVNRLRGVLNVAAVKAPGFGDRRKAMLEDMAVLTNGQLITEDAGLKLDNAKLEMLGTARRVTINKDTTTIVAEGNETAVKGRCEQIKKQMDETDSTYDKEKLQERLAKLAGGVAVVKVGAATETEMKDKKLRLEDAINATKAAVEEGIVPGGGTTLTHLASDLQKWANSNLSGEELIGSNIVEASLAAPLMRIAENAGANGAVVAENVKSRPISDGYNAATGDYIDMLAAGIVDPAKVTRSGLQNAASIAGMVLTTECIVADLPEKKEAAPAGGGGMGGDFDY</sequence>